<sequence>MGNKIRTTVLLAAMTALMMIIGQMLGGRQGMMIALIFAGVMNFASYWYSDKIVLKMYQAREITPESAHGLYAIVQRLVQRANLPMPRIFIIPQDTPNAFATGRNPDHAVVAVTEGLLNLLDEQEITGVLAHELAHVKNRDILIGTIAATMAGAIMMLASMARWGAIFGGTRSSDDEGGSSVIGLIALSIIAPMAAMVIQMAISRSREYLADATGAAISGNPEGLASALEKLGTYSKQIPMRANPSTAHIFTVSPLSGTTLMNLFSTHPPLESRIARLRHGSDSGTGNRDSSIRRRNMNTEAKAAWDRLR</sequence>
<feature type="chain" id="PRO_1000203970" description="Protease HtpX homolog">
    <location>
        <begin position="1"/>
        <end position="309"/>
    </location>
</feature>
<feature type="transmembrane region" description="Helical" evidence="1">
    <location>
        <begin position="7"/>
        <end position="27"/>
    </location>
</feature>
<feature type="transmembrane region" description="Helical" evidence="1">
    <location>
        <begin position="29"/>
        <end position="49"/>
    </location>
</feature>
<feature type="transmembrane region" description="Helical" evidence="1">
    <location>
        <begin position="141"/>
        <end position="161"/>
    </location>
</feature>
<feature type="transmembrane region" description="Helical" evidence="1">
    <location>
        <begin position="182"/>
        <end position="202"/>
    </location>
</feature>
<feature type="region of interest" description="Disordered" evidence="2">
    <location>
        <begin position="278"/>
        <end position="309"/>
    </location>
</feature>
<feature type="active site" evidence="1">
    <location>
        <position position="132"/>
    </location>
</feature>
<feature type="binding site" evidence="1">
    <location>
        <position position="131"/>
    </location>
    <ligand>
        <name>Zn(2+)</name>
        <dbReference type="ChEBI" id="CHEBI:29105"/>
        <note>catalytic</note>
    </ligand>
</feature>
<feature type="binding site" evidence="1">
    <location>
        <position position="135"/>
    </location>
    <ligand>
        <name>Zn(2+)</name>
        <dbReference type="ChEBI" id="CHEBI:29105"/>
        <note>catalytic</note>
    </ligand>
</feature>
<feature type="binding site" evidence="1">
    <location>
        <position position="207"/>
    </location>
    <ligand>
        <name>Zn(2+)</name>
        <dbReference type="ChEBI" id="CHEBI:29105"/>
        <note>catalytic</note>
    </ligand>
</feature>
<name>HTPX_DESAH</name>
<evidence type="ECO:0000255" key="1">
    <source>
        <dbReference type="HAMAP-Rule" id="MF_00188"/>
    </source>
</evidence>
<evidence type="ECO:0000256" key="2">
    <source>
        <dbReference type="SAM" id="MobiDB-lite"/>
    </source>
</evidence>
<proteinExistence type="inferred from homology"/>
<reference key="1">
    <citation type="journal article" date="2009" name="Environ. Microbiol.">
        <title>Genome sequence of Desulfobacterium autotrophicum HRM2, a marine sulfate reducer oxidizing organic carbon completely to carbon dioxide.</title>
        <authorList>
            <person name="Strittmatter A.W."/>
            <person name="Liesegang H."/>
            <person name="Rabus R."/>
            <person name="Decker I."/>
            <person name="Amann J."/>
            <person name="Andres S."/>
            <person name="Henne A."/>
            <person name="Fricke W.F."/>
            <person name="Martinez-Arias R."/>
            <person name="Bartels D."/>
            <person name="Goesmann A."/>
            <person name="Krause L."/>
            <person name="Puehler A."/>
            <person name="Klenk H.P."/>
            <person name="Richter M."/>
            <person name="Schuler M."/>
            <person name="Gloeckner F.O."/>
            <person name="Meyerdierks A."/>
            <person name="Gottschalk G."/>
            <person name="Amann R."/>
        </authorList>
    </citation>
    <scope>NUCLEOTIDE SEQUENCE [LARGE SCALE GENOMIC DNA]</scope>
    <source>
        <strain>ATCC 43914 / DSM 3382 / VKM B-1955 / HRM2</strain>
    </source>
</reference>
<organism>
    <name type="scientific">Desulforapulum autotrophicum (strain ATCC 43914 / DSM 3382 / VKM B-1955 / HRM2)</name>
    <name type="common">Desulfobacterium autotrophicum</name>
    <dbReference type="NCBI Taxonomy" id="177437"/>
    <lineage>
        <taxon>Bacteria</taxon>
        <taxon>Pseudomonadati</taxon>
        <taxon>Thermodesulfobacteriota</taxon>
        <taxon>Desulfobacteria</taxon>
        <taxon>Desulfobacterales</taxon>
        <taxon>Desulfobacteraceae</taxon>
        <taxon>Desulforapulum</taxon>
    </lineage>
</organism>
<accession>C0QEI1</accession>
<protein>
    <recommendedName>
        <fullName evidence="1">Protease HtpX homolog</fullName>
        <ecNumber evidence="1">3.4.24.-</ecNumber>
    </recommendedName>
</protein>
<keyword id="KW-0997">Cell inner membrane</keyword>
<keyword id="KW-1003">Cell membrane</keyword>
<keyword id="KW-0378">Hydrolase</keyword>
<keyword id="KW-0472">Membrane</keyword>
<keyword id="KW-0479">Metal-binding</keyword>
<keyword id="KW-0482">Metalloprotease</keyword>
<keyword id="KW-0645">Protease</keyword>
<keyword id="KW-1185">Reference proteome</keyword>
<keyword id="KW-0812">Transmembrane</keyword>
<keyword id="KW-1133">Transmembrane helix</keyword>
<keyword id="KW-0862">Zinc</keyword>
<comment type="cofactor">
    <cofactor evidence="1">
        <name>Zn(2+)</name>
        <dbReference type="ChEBI" id="CHEBI:29105"/>
    </cofactor>
    <text evidence="1">Binds 1 zinc ion per subunit.</text>
</comment>
<comment type="subcellular location">
    <subcellularLocation>
        <location evidence="1">Cell inner membrane</location>
        <topology evidence="1">Multi-pass membrane protein</topology>
    </subcellularLocation>
</comment>
<comment type="similarity">
    <text evidence="1">Belongs to the peptidase M48B family.</text>
</comment>
<gene>
    <name evidence="1" type="primary">htpX</name>
    <name type="ordered locus">HRM2_22250</name>
</gene>
<dbReference type="EC" id="3.4.24.-" evidence="1"/>
<dbReference type="EMBL" id="CP001087">
    <property type="protein sequence ID" value="ACN15323.1"/>
    <property type="molecule type" value="Genomic_DNA"/>
</dbReference>
<dbReference type="RefSeq" id="WP_015904092.1">
    <property type="nucleotide sequence ID" value="NC_012108.1"/>
</dbReference>
<dbReference type="STRING" id="177437.HRM2_22250"/>
<dbReference type="KEGG" id="dat:HRM2_22250"/>
<dbReference type="eggNOG" id="COG0501">
    <property type="taxonomic scope" value="Bacteria"/>
</dbReference>
<dbReference type="HOGENOM" id="CLU_042266_3_0_7"/>
<dbReference type="OrthoDB" id="15218at2"/>
<dbReference type="Proteomes" id="UP000000442">
    <property type="component" value="Chromosome"/>
</dbReference>
<dbReference type="GO" id="GO:0005886">
    <property type="term" value="C:plasma membrane"/>
    <property type="evidence" value="ECO:0007669"/>
    <property type="project" value="UniProtKB-SubCell"/>
</dbReference>
<dbReference type="GO" id="GO:0004222">
    <property type="term" value="F:metalloendopeptidase activity"/>
    <property type="evidence" value="ECO:0007669"/>
    <property type="project" value="UniProtKB-UniRule"/>
</dbReference>
<dbReference type="GO" id="GO:0008270">
    <property type="term" value="F:zinc ion binding"/>
    <property type="evidence" value="ECO:0007669"/>
    <property type="project" value="UniProtKB-UniRule"/>
</dbReference>
<dbReference type="GO" id="GO:0006508">
    <property type="term" value="P:proteolysis"/>
    <property type="evidence" value="ECO:0007669"/>
    <property type="project" value="UniProtKB-KW"/>
</dbReference>
<dbReference type="CDD" id="cd07336">
    <property type="entry name" value="M48B_HtpX_like"/>
    <property type="match status" value="1"/>
</dbReference>
<dbReference type="Gene3D" id="3.30.2010.10">
    <property type="entry name" value="Metalloproteases ('zincins'), catalytic domain"/>
    <property type="match status" value="1"/>
</dbReference>
<dbReference type="HAMAP" id="MF_00188">
    <property type="entry name" value="Pept_M48_protease_HtpX"/>
    <property type="match status" value="1"/>
</dbReference>
<dbReference type="InterPro" id="IPR050083">
    <property type="entry name" value="HtpX_protease"/>
</dbReference>
<dbReference type="InterPro" id="IPR022919">
    <property type="entry name" value="Pept_M48_protease_HtpX"/>
</dbReference>
<dbReference type="InterPro" id="IPR001915">
    <property type="entry name" value="Peptidase_M48"/>
</dbReference>
<dbReference type="NCBIfam" id="NF002826">
    <property type="entry name" value="PRK03001.1"/>
    <property type="match status" value="1"/>
</dbReference>
<dbReference type="PANTHER" id="PTHR43221">
    <property type="entry name" value="PROTEASE HTPX"/>
    <property type="match status" value="1"/>
</dbReference>
<dbReference type="PANTHER" id="PTHR43221:SF1">
    <property type="entry name" value="PROTEASE HTPX"/>
    <property type="match status" value="1"/>
</dbReference>
<dbReference type="Pfam" id="PF01435">
    <property type="entry name" value="Peptidase_M48"/>
    <property type="match status" value="1"/>
</dbReference>